<protein>
    <recommendedName>
        <fullName>Uncharacterized protein U61</fullName>
    </recommendedName>
</protein>
<sequence>MAAESTLRGKDSTCSTIKLQFLLILSIILKRSSFVSQFSKSSFIPFNAEFIPLSEYTRTELQSAYCRREPLYKERRVQHDFRFPAPSIYQDPIYIFDQFRKPFNIFFNEAEQLSV</sequence>
<organism>
    <name type="scientific">Human herpesvirus 6A (strain Uganda-1102)</name>
    <name type="common">HHV-6 variant A</name>
    <name type="synonym">Human B lymphotropic virus</name>
    <dbReference type="NCBI Taxonomy" id="10370"/>
    <lineage>
        <taxon>Viruses</taxon>
        <taxon>Duplodnaviria</taxon>
        <taxon>Heunggongvirae</taxon>
        <taxon>Peploviricota</taxon>
        <taxon>Herviviricetes</taxon>
        <taxon>Herpesvirales</taxon>
        <taxon>Orthoherpesviridae</taxon>
        <taxon>Betaherpesvirinae</taxon>
        <taxon>Roseolovirus</taxon>
        <taxon>Roseolovirus humanbeta6a</taxon>
        <taxon>Human betaherpesvirus 6A</taxon>
    </lineage>
</organism>
<proteinExistence type="predicted"/>
<name>U61_HHV6U</name>
<gene>
    <name type="primary">U61</name>
</gene>
<accession>Q69562</accession>
<dbReference type="EMBL" id="X83413">
    <property type="status" value="NOT_ANNOTATED_CDS"/>
    <property type="molecule type" value="Genomic_DNA"/>
</dbReference>
<dbReference type="Proteomes" id="UP000009295">
    <property type="component" value="Segment"/>
</dbReference>
<organismHost>
    <name type="scientific">Homo sapiens</name>
    <name type="common">Human</name>
    <dbReference type="NCBI Taxonomy" id="9606"/>
</organismHost>
<reference key="1">
    <citation type="journal article" date="1990" name="J. Virol.">
        <title>Human herpesvirus 6 is closely related to human cytomegalovirus.</title>
        <authorList>
            <person name="Lawrence G.L."/>
            <person name="Chee M."/>
            <person name="Craxton M.A."/>
            <person name="Gompels U.A."/>
            <person name="Honess R.W."/>
            <person name="Barrell B.G."/>
        </authorList>
    </citation>
    <scope>NUCLEOTIDE SEQUENCE [GENOMIC DNA]</scope>
</reference>
<reference key="2">
    <citation type="journal article" date="1995" name="Virology">
        <title>The DNA sequence of human herpesvirus-6: structure, coding content, and genome evolution.</title>
        <authorList>
            <person name="Gompels U.A."/>
            <person name="Nicholas J."/>
            <person name="Lawrence G.L."/>
            <person name="Jones M."/>
            <person name="Thomson B.J."/>
            <person name="Martin M.E.D."/>
            <person name="Efstathiou S."/>
            <person name="Craxton M.A."/>
            <person name="Macaulay H.A."/>
        </authorList>
    </citation>
    <scope>NUCLEOTIDE SEQUENCE [LARGE SCALE GENOMIC DNA]</scope>
</reference>
<keyword id="KW-1185">Reference proteome</keyword>
<feature type="chain" id="PRO_0000342581" description="Uncharacterized protein U61">
    <location>
        <begin position="1"/>
        <end position="115"/>
    </location>
</feature>